<proteinExistence type="inferred from homology"/>
<organism>
    <name type="scientific">Campylobacter curvus (strain 525.92)</name>
    <dbReference type="NCBI Taxonomy" id="360105"/>
    <lineage>
        <taxon>Bacteria</taxon>
        <taxon>Pseudomonadati</taxon>
        <taxon>Campylobacterota</taxon>
        <taxon>Epsilonproteobacteria</taxon>
        <taxon>Campylobacterales</taxon>
        <taxon>Campylobacteraceae</taxon>
        <taxon>Campylobacter</taxon>
    </lineage>
</organism>
<protein>
    <recommendedName>
        <fullName evidence="1">Protein GrpE</fullName>
    </recommendedName>
    <alternativeName>
        <fullName evidence="1">HSP-70 cofactor</fullName>
    </alternativeName>
</protein>
<name>GRPE_CAMC5</name>
<feature type="chain" id="PRO_1000053563" description="Protein GrpE">
    <location>
        <begin position="1"/>
        <end position="179"/>
    </location>
</feature>
<feature type="region of interest" description="Disordered" evidence="2">
    <location>
        <begin position="1"/>
        <end position="23"/>
    </location>
</feature>
<dbReference type="EMBL" id="CP000767">
    <property type="protein sequence ID" value="EAU00250.1"/>
    <property type="molecule type" value="Genomic_DNA"/>
</dbReference>
<dbReference type="RefSeq" id="WP_009649992.1">
    <property type="nucleotide sequence ID" value="NC_009715.2"/>
</dbReference>
<dbReference type="SMR" id="A7GXU2"/>
<dbReference type="STRING" id="360105.CCV52592_0150"/>
<dbReference type="KEGG" id="ccv:CCV52592_0150"/>
<dbReference type="HOGENOM" id="CLU_057217_6_3_7"/>
<dbReference type="OrthoDB" id="9789811at2"/>
<dbReference type="Proteomes" id="UP000006380">
    <property type="component" value="Chromosome"/>
</dbReference>
<dbReference type="GO" id="GO:0005829">
    <property type="term" value="C:cytosol"/>
    <property type="evidence" value="ECO:0007669"/>
    <property type="project" value="TreeGrafter"/>
</dbReference>
<dbReference type="GO" id="GO:0000774">
    <property type="term" value="F:adenyl-nucleotide exchange factor activity"/>
    <property type="evidence" value="ECO:0007669"/>
    <property type="project" value="InterPro"/>
</dbReference>
<dbReference type="GO" id="GO:0042803">
    <property type="term" value="F:protein homodimerization activity"/>
    <property type="evidence" value="ECO:0007669"/>
    <property type="project" value="InterPro"/>
</dbReference>
<dbReference type="GO" id="GO:0051087">
    <property type="term" value="F:protein-folding chaperone binding"/>
    <property type="evidence" value="ECO:0007669"/>
    <property type="project" value="InterPro"/>
</dbReference>
<dbReference type="GO" id="GO:0051082">
    <property type="term" value="F:unfolded protein binding"/>
    <property type="evidence" value="ECO:0007669"/>
    <property type="project" value="TreeGrafter"/>
</dbReference>
<dbReference type="GO" id="GO:0006457">
    <property type="term" value="P:protein folding"/>
    <property type="evidence" value="ECO:0007669"/>
    <property type="project" value="InterPro"/>
</dbReference>
<dbReference type="CDD" id="cd00446">
    <property type="entry name" value="GrpE"/>
    <property type="match status" value="1"/>
</dbReference>
<dbReference type="FunFam" id="2.30.22.10:FF:000001">
    <property type="entry name" value="Protein GrpE"/>
    <property type="match status" value="1"/>
</dbReference>
<dbReference type="Gene3D" id="3.90.20.20">
    <property type="match status" value="1"/>
</dbReference>
<dbReference type="Gene3D" id="2.30.22.10">
    <property type="entry name" value="Head domain of nucleotide exchange factor GrpE"/>
    <property type="match status" value="1"/>
</dbReference>
<dbReference type="HAMAP" id="MF_01151">
    <property type="entry name" value="GrpE"/>
    <property type="match status" value="1"/>
</dbReference>
<dbReference type="InterPro" id="IPR000740">
    <property type="entry name" value="GrpE"/>
</dbReference>
<dbReference type="InterPro" id="IPR013805">
    <property type="entry name" value="GrpE_coiled_coil"/>
</dbReference>
<dbReference type="InterPro" id="IPR009012">
    <property type="entry name" value="GrpE_head"/>
</dbReference>
<dbReference type="NCBIfam" id="NF010738">
    <property type="entry name" value="PRK14140.1"/>
    <property type="match status" value="1"/>
</dbReference>
<dbReference type="NCBIfam" id="NF010747">
    <property type="entry name" value="PRK14149.1"/>
    <property type="match status" value="1"/>
</dbReference>
<dbReference type="NCBIfam" id="NF010756">
    <property type="entry name" value="PRK14159.1"/>
    <property type="match status" value="1"/>
</dbReference>
<dbReference type="PANTHER" id="PTHR21237">
    <property type="entry name" value="GRPE PROTEIN"/>
    <property type="match status" value="1"/>
</dbReference>
<dbReference type="PANTHER" id="PTHR21237:SF23">
    <property type="entry name" value="GRPE PROTEIN HOMOLOG, MITOCHONDRIAL"/>
    <property type="match status" value="1"/>
</dbReference>
<dbReference type="Pfam" id="PF01025">
    <property type="entry name" value="GrpE"/>
    <property type="match status" value="1"/>
</dbReference>
<dbReference type="PRINTS" id="PR00773">
    <property type="entry name" value="GRPEPROTEIN"/>
</dbReference>
<dbReference type="SUPFAM" id="SSF58014">
    <property type="entry name" value="Coiled-coil domain of nucleotide exchange factor GrpE"/>
    <property type="match status" value="1"/>
</dbReference>
<dbReference type="SUPFAM" id="SSF51064">
    <property type="entry name" value="Head domain of nucleotide exchange factor GrpE"/>
    <property type="match status" value="1"/>
</dbReference>
<dbReference type="PROSITE" id="PS01071">
    <property type="entry name" value="GRPE"/>
    <property type="match status" value="1"/>
</dbReference>
<sequence length="179" mass="20171">MSEEIKEQNVQDAQNENLAPDSVNFDGLSDAAKVAELENKLNELTDKYYRANAEFENIKKRFEKEKTDIASYANEKFARDLLPVIDALEIAANFDPDDDEFAKNVKEGVLITINQFKKCFEKHGMSEIDTSGEFDPNVHNAVLRVDSEDHTSGQIVQVMQKGYIINGRVLRPAMVSVAN</sequence>
<accession>A7GXU2</accession>
<evidence type="ECO:0000255" key="1">
    <source>
        <dbReference type="HAMAP-Rule" id="MF_01151"/>
    </source>
</evidence>
<evidence type="ECO:0000256" key="2">
    <source>
        <dbReference type="SAM" id="MobiDB-lite"/>
    </source>
</evidence>
<gene>
    <name evidence="1" type="primary">grpE</name>
    <name type="ordered locus">Ccur92_07300</name>
    <name type="ORF">CCV52592_0150</name>
</gene>
<comment type="function">
    <text evidence="1">Participates actively in the response to hyperosmotic and heat shock by preventing the aggregation of stress-denatured proteins, in association with DnaK and GrpE. It is the nucleotide exchange factor for DnaK and may function as a thermosensor. Unfolded proteins bind initially to DnaJ; upon interaction with the DnaJ-bound protein, DnaK hydrolyzes its bound ATP, resulting in the formation of a stable complex. GrpE releases ADP from DnaK; ATP binding to DnaK triggers the release of the substrate protein, thus completing the reaction cycle. Several rounds of ATP-dependent interactions between DnaJ, DnaK and GrpE are required for fully efficient folding.</text>
</comment>
<comment type="subunit">
    <text evidence="1">Homodimer.</text>
</comment>
<comment type="subcellular location">
    <subcellularLocation>
        <location evidence="1">Cytoplasm</location>
    </subcellularLocation>
</comment>
<comment type="similarity">
    <text evidence="1">Belongs to the GrpE family.</text>
</comment>
<reference key="1">
    <citation type="submission" date="2007-07" db="EMBL/GenBank/DDBJ databases">
        <title>Genome sequence of Campylobacter curvus 525.92 isolated from human feces.</title>
        <authorList>
            <person name="Fouts D.E."/>
            <person name="Mongodin E.F."/>
            <person name="Puiu D."/>
            <person name="Sebastian Y."/>
            <person name="Miller W.G."/>
            <person name="Mandrell R.E."/>
            <person name="Lastovica A.J."/>
            <person name="Nelson K.E."/>
        </authorList>
    </citation>
    <scope>NUCLEOTIDE SEQUENCE [LARGE SCALE GENOMIC DNA]</scope>
    <source>
        <strain>525.92</strain>
    </source>
</reference>
<keyword id="KW-0143">Chaperone</keyword>
<keyword id="KW-0963">Cytoplasm</keyword>
<keyword id="KW-1185">Reference proteome</keyword>
<keyword id="KW-0346">Stress response</keyword>